<accession>Q9JV69</accession>
<accession>A1IR12</accession>
<sequence length="283" mass="30482">MNTLKFTKMHGLGNDFMVIDAVSQDFTPEDAPIAAWADRFRGVGFDQLLVVGRSETEGVDFRYRIFNADGSEVGQCGNGARCFARFVADKGLTDKKEICVETANGVIFPKLSDNGMVTVNMGKPRFMPSEIPFVPESGEGDDACIYGVHLESGIQPVSCVNMGNPHAVIVVDDVECAQVRETGSLIEPHRQFPERVNVGFMQIVSRTAIRLRVFERGVGETQACGTGACAAVVAGIRLGLLDEGKTVEVILPGGTLYIEWACGGDVMMTGPAETVFEGELAYS</sequence>
<reference key="1">
    <citation type="journal article" date="2000" name="Nature">
        <title>Complete DNA sequence of a serogroup A strain of Neisseria meningitidis Z2491.</title>
        <authorList>
            <person name="Parkhill J."/>
            <person name="Achtman M."/>
            <person name="James K.D."/>
            <person name="Bentley S.D."/>
            <person name="Churcher C.M."/>
            <person name="Klee S.R."/>
            <person name="Morelli G."/>
            <person name="Basham D."/>
            <person name="Brown D."/>
            <person name="Chillingworth T."/>
            <person name="Davies R.M."/>
            <person name="Davis P."/>
            <person name="Devlin K."/>
            <person name="Feltwell T."/>
            <person name="Hamlin N."/>
            <person name="Holroyd S."/>
            <person name="Jagels K."/>
            <person name="Leather S."/>
            <person name="Moule S."/>
            <person name="Mungall K.L."/>
            <person name="Quail M.A."/>
            <person name="Rajandream M.A."/>
            <person name="Rutherford K.M."/>
            <person name="Simmonds M."/>
            <person name="Skelton J."/>
            <person name="Whitehead S."/>
            <person name="Spratt B.G."/>
            <person name="Barrell B.G."/>
        </authorList>
    </citation>
    <scope>NUCLEOTIDE SEQUENCE [LARGE SCALE GENOMIC DNA]</scope>
    <source>
        <strain>DSM 15465 / Z2491</strain>
    </source>
</reference>
<dbReference type="EC" id="5.1.1.7" evidence="1"/>
<dbReference type="EMBL" id="AL157959">
    <property type="protein sequence ID" value="CAM08196.1"/>
    <property type="molecule type" value="Genomic_DNA"/>
</dbReference>
<dbReference type="PIR" id="C81944">
    <property type="entry name" value="C81944"/>
</dbReference>
<dbReference type="RefSeq" id="WP_002236843.1">
    <property type="nucleotide sequence ID" value="NC_003116.1"/>
</dbReference>
<dbReference type="SMR" id="Q9JV69"/>
<dbReference type="EnsemblBacteria" id="CAM08196">
    <property type="protein sequence ID" value="CAM08196"/>
    <property type="gene ID" value="NMA0972"/>
</dbReference>
<dbReference type="GeneID" id="93386410"/>
<dbReference type="KEGG" id="nma:NMA0972"/>
<dbReference type="HOGENOM" id="CLU_053306_1_1_4"/>
<dbReference type="UniPathway" id="UPA00034">
    <property type="reaction ID" value="UER00025"/>
</dbReference>
<dbReference type="Proteomes" id="UP000000626">
    <property type="component" value="Chromosome"/>
</dbReference>
<dbReference type="GO" id="GO:0005829">
    <property type="term" value="C:cytosol"/>
    <property type="evidence" value="ECO:0007669"/>
    <property type="project" value="TreeGrafter"/>
</dbReference>
<dbReference type="GO" id="GO:0008837">
    <property type="term" value="F:diaminopimelate epimerase activity"/>
    <property type="evidence" value="ECO:0007669"/>
    <property type="project" value="UniProtKB-UniRule"/>
</dbReference>
<dbReference type="GO" id="GO:0009089">
    <property type="term" value="P:lysine biosynthetic process via diaminopimelate"/>
    <property type="evidence" value="ECO:0007669"/>
    <property type="project" value="UniProtKB-UniRule"/>
</dbReference>
<dbReference type="FunFam" id="3.10.310.10:FF:000001">
    <property type="entry name" value="Diaminopimelate epimerase"/>
    <property type="match status" value="1"/>
</dbReference>
<dbReference type="FunFam" id="3.10.310.10:FF:000004">
    <property type="entry name" value="Diaminopimelate epimerase"/>
    <property type="match status" value="1"/>
</dbReference>
<dbReference type="Gene3D" id="3.10.310.10">
    <property type="entry name" value="Diaminopimelate Epimerase, Chain A, domain 1"/>
    <property type="match status" value="2"/>
</dbReference>
<dbReference type="HAMAP" id="MF_00197">
    <property type="entry name" value="DAP_epimerase"/>
    <property type="match status" value="1"/>
</dbReference>
<dbReference type="InterPro" id="IPR018510">
    <property type="entry name" value="DAP_epimerase_AS"/>
</dbReference>
<dbReference type="InterPro" id="IPR001653">
    <property type="entry name" value="DAP_epimerase_DapF"/>
</dbReference>
<dbReference type="NCBIfam" id="TIGR00652">
    <property type="entry name" value="DapF"/>
    <property type="match status" value="1"/>
</dbReference>
<dbReference type="PANTHER" id="PTHR31689:SF0">
    <property type="entry name" value="DIAMINOPIMELATE EPIMERASE"/>
    <property type="match status" value="1"/>
</dbReference>
<dbReference type="PANTHER" id="PTHR31689">
    <property type="entry name" value="DIAMINOPIMELATE EPIMERASE, CHLOROPLASTIC"/>
    <property type="match status" value="1"/>
</dbReference>
<dbReference type="Pfam" id="PF01678">
    <property type="entry name" value="DAP_epimerase"/>
    <property type="match status" value="2"/>
</dbReference>
<dbReference type="SUPFAM" id="SSF54506">
    <property type="entry name" value="Diaminopimelate epimerase-like"/>
    <property type="match status" value="1"/>
</dbReference>
<dbReference type="PROSITE" id="PS01326">
    <property type="entry name" value="DAP_EPIMERASE"/>
    <property type="match status" value="1"/>
</dbReference>
<evidence type="ECO:0000255" key="1">
    <source>
        <dbReference type="HAMAP-Rule" id="MF_00197"/>
    </source>
</evidence>
<gene>
    <name evidence="1" type="primary">dapF</name>
    <name type="ordered locus">NMA0972</name>
</gene>
<protein>
    <recommendedName>
        <fullName evidence="1">Diaminopimelate epimerase</fullName>
        <shortName evidence="1">DAP epimerase</shortName>
        <ecNumber evidence="1">5.1.1.7</ecNumber>
    </recommendedName>
    <alternativeName>
        <fullName evidence="1">PLP-independent amino acid racemase</fullName>
    </alternativeName>
</protein>
<comment type="function">
    <text evidence="1">Catalyzes the stereoinversion of LL-2,6-diaminopimelate (L,L-DAP) to meso-diaminopimelate (meso-DAP), a precursor of L-lysine and an essential component of the bacterial peptidoglycan.</text>
</comment>
<comment type="catalytic activity">
    <reaction evidence="1">
        <text>(2S,6S)-2,6-diaminopimelate = meso-2,6-diaminopimelate</text>
        <dbReference type="Rhea" id="RHEA:15393"/>
        <dbReference type="ChEBI" id="CHEBI:57609"/>
        <dbReference type="ChEBI" id="CHEBI:57791"/>
        <dbReference type="EC" id="5.1.1.7"/>
    </reaction>
</comment>
<comment type="pathway">
    <text evidence="1">Amino-acid biosynthesis; L-lysine biosynthesis via DAP pathway; DL-2,6-diaminopimelate from LL-2,6-diaminopimelate: step 1/1.</text>
</comment>
<comment type="subunit">
    <text evidence="1">Homodimer.</text>
</comment>
<comment type="subcellular location">
    <subcellularLocation>
        <location evidence="1">Cytoplasm</location>
    </subcellularLocation>
</comment>
<comment type="similarity">
    <text evidence="1">Belongs to the diaminopimelate epimerase family.</text>
</comment>
<organism>
    <name type="scientific">Neisseria meningitidis serogroup A / serotype 4A (strain DSM 15465 / Z2491)</name>
    <dbReference type="NCBI Taxonomy" id="122587"/>
    <lineage>
        <taxon>Bacteria</taxon>
        <taxon>Pseudomonadati</taxon>
        <taxon>Pseudomonadota</taxon>
        <taxon>Betaproteobacteria</taxon>
        <taxon>Neisseriales</taxon>
        <taxon>Neisseriaceae</taxon>
        <taxon>Neisseria</taxon>
    </lineage>
</organism>
<feature type="chain" id="PRO_0000149855" description="Diaminopimelate epimerase">
    <location>
        <begin position="1"/>
        <end position="283"/>
    </location>
</feature>
<feature type="active site" description="Proton donor" evidence="1">
    <location>
        <position position="76"/>
    </location>
</feature>
<feature type="active site" description="Proton acceptor" evidence="1">
    <location>
        <position position="224"/>
    </location>
</feature>
<feature type="binding site" evidence="1">
    <location>
        <position position="14"/>
    </location>
    <ligand>
        <name>substrate</name>
    </ligand>
</feature>
<feature type="binding site" evidence="1">
    <location>
        <position position="47"/>
    </location>
    <ligand>
        <name>substrate</name>
    </ligand>
</feature>
<feature type="binding site" evidence="1">
    <location>
        <position position="67"/>
    </location>
    <ligand>
        <name>substrate</name>
    </ligand>
</feature>
<feature type="binding site" evidence="1">
    <location>
        <begin position="77"/>
        <end position="78"/>
    </location>
    <ligand>
        <name>substrate</name>
    </ligand>
</feature>
<feature type="binding site" evidence="1">
    <location>
        <position position="164"/>
    </location>
    <ligand>
        <name>substrate</name>
    </ligand>
</feature>
<feature type="binding site" evidence="1">
    <location>
        <position position="197"/>
    </location>
    <ligand>
        <name>substrate</name>
    </ligand>
</feature>
<feature type="binding site" evidence="1">
    <location>
        <begin position="215"/>
        <end position="216"/>
    </location>
    <ligand>
        <name>substrate</name>
    </ligand>
</feature>
<feature type="binding site" evidence="1">
    <location>
        <begin position="225"/>
        <end position="226"/>
    </location>
    <ligand>
        <name>substrate</name>
    </ligand>
</feature>
<feature type="site" description="Could be important to modulate the pK values of the two catalytic cysteine residues" evidence="1">
    <location>
        <position position="166"/>
    </location>
</feature>
<feature type="site" description="Could be important to modulate the pK values of the two catalytic cysteine residues" evidence="1">
    <location>
        <position position="215"/>
    </location>
</feature>
<keyword id="KW-0028">Amino-acid biosynthesis</keyword>
<keyword id="KW-0963">Cytoplasm</keyword>
<keyword id="KW-0413">Isomerase</keyword>
<keyword id="KW-0457">Lysine biosynthesis</keyword>
<proteinExistence type="inferred from homology"/>
<name>DAPF_NEIMA</name>